<organism>
    <name type="scientific">Conus victoriae</name>
    <name type="common">Queen Victoria cone</name>
    <dbReference type="NCBI Taxonomy" id="319920"/>
    <lineage>
        <taxon>Eukaryota</taxon>
        <taxon>Metazoa</taxon>
        <taxon>Spiralia</taxon>
        <taxon>Lophotrochozoa</taxon>
        <taxon>Mollusca</taxon>
        <taxon>Gastropoda</taxon>
        <taxon>Caenogastropoda</taxon>
        <taxon>Neogastropoda</taxon>
        <taxon>Conoidea</taxon>
        <taxon>Conidae</taxon>
        <taxon>Conus</taxon>
        <taxon>Cylinder</taxon>
    </lineage>
</organism>
<dbReference type="EMBL" id="GAIH01000101">
    <property type="protein sequence ID" value="JAB84616.1"/>
    <property type="molecule type" value="mRNA"/>
</dbReference>
<dbReference type="GO" id="GO:0005576">
    <property type="term" value="C:extracellular region"/>
    <property type="evidence" value="ECO:0007669"/>
    <property type="project" value="UniProtKB-SubCell"/>
</dbReference>
<evidence type="ECO:0000250" key="1">
    <source>
        <dbReference type="UniProtKB" id="P0DPM3"/>
    </source>
</evidence>
<evidence type="ECO:0000250" key="2">
    <source>
        <dbReference type="UniProtKB" id="Q26443"/>
    </source>
</evidence>
<evidence type="ECO:0000255" key="3"/>
<evidence type="ECO:0000303" key="4">
    <source>
    </source>
</evidence>
<evidence type="ECO:0000305" key="5"/>
<evidence type="ECO:0000305" key="6">
    <source>
    </source>
</evidence>
<evidence type="ECO:0000312" key="7">
    <source>
        <dbReference type="EMBL" id="JAB84616.1"/>
    </source>
</evidence>
<comment type="subcellular location">
    <subcellularLocation>
        <location evidence="6">Secreted</location>
    </subcellularLocation>
</comment>
<comment type="tissue specificity">
    <text evidence="6">Expressed by the venom duct.</text>
</comment>
<comment type="domain">
    <text evidence="5">The cysteine framework is VI/VII (C-C-CC-C-C).</text>
</comment>
<comment type="domain">
    <text evidence="1">Displays a mini-granulin fold, a structure composed of two short, stacked beta-hairpins connected by two parallel disulfide bonds. This newly described fold is derived from the same cysteine connectivity as knottins (ICK fold). The name 'mini-granulin fold' comes from the structural homology with the N-terminal region of the human granulin.</text>
</comment>
<comment type="similarity">
    <text evidence="5">Belongs to the conotoxin U superfamily.</text>
</comment>
<accession>W4VS82</accession>
<feature type="signal peptide" evidence="3">
    <location>
        <begin position="1"/>
        <end position="24"/>
    </location>
</feature>
<feature type="propeptide" id="PRO_0000454997" evidence="5">
    <location>
        <begin position="25"/>
        <end position="45"/>
    </location>
</feature>
<feature type="peptide" id="PRO_5004850811" description="Conotoxin Vc7.4" evidence="5">
    <location>
        <begin position="46"/>
        <end position="68"/>
    </location>
</feature>
<feature type="disulfide bond" evidence="2">
    <location>
        <begin position="47"/>
        <end position="55"/>
    </location>
</feature>
<feature type="disulfide bond" evidence="2">
    <location>
        <begin position="50"/>
        <end position="60"/>
    </location>
</feature>
<feature type="disulfide bond" evidence="2">
    <location>
        <begin position="54"/>
        <end position="65"/>
    </location>
</feature>
<proteinExistence type="inferred from homology"/>
<name>CU74_CONVC</name>
<keyword id="KW-1015">Disulfide bond</keyword>
<keyword id="KW-0964">Secreted</keyword>
<keyword id="KW-0732">Signal</keyword>
<reference evidence="7" key="1">
    <citation type="journal article" date="2014" name="PLoS ONE">
        <title>Diversity of conotoxin gene superfamilies in the venomous snail, Conus victoriae.</title>
        <authorList>
            <person name="Robinson S.D."/>
            <person name="Safavi-Hemami H."/>
            <person name="McIntosh L.D."/>
            <person name="Purcell A.W."/>
            <person name="Norton R.S."/>
            <person name="Papenfuss A.T."/>
        </authorList>
    </citation>
    <scope>NUCLEOTIDE SEQUENCE [MRNA]</scope>
    <source>
        <tissue>Venom gland</tissue>
    </source>
</reference>
<protein>
    <recommendedName>
        <fullName evidence="4">Conotoxin Vc7.4</fullName>
    </recommendedName>
</protein>
<sequence>MIRMGFFLTLTVAVLLTSLICTEAVPTDKRGMERLFDHVLLKDQRQCPYCVVHCCPPSYCQASGCRPP</sequence>